<accession>A4TPV4</accession>
<keyword id="KW-0067">ATP-binding</keyword>
<keyword id="KW-0963">Cytoplasm</keyword>
<keyword id="KW-0436">Ligase</keyword>
<keyword id="KW-0547">Nucleotide-binding</keyword>
<keyword id="KW-0566">Pantothenate biosynthesis</keyword>
<gene>
    <name evidence="1" type="primary">panC</name>
    <name type="ordered locus">YPDSF_2954</name>
</gene>
<comment type="function">
    <text evidence="1">Catalyzes the condensation of pantoate with beta-alanine in an ATP-dependent reaction via a pantoyl-adenylate intermediate.</text>
</comment>
<comment type="catalytic activity">
    <reaction evidence="1">
        <text>(R)-pantoate + beta-alanine + ATP = (R)-pantothenate + AMP + diphosphate + H(+)</text>
        <dbReference type="Rhea" id="RHEA:10912"/>
        <dbReference type="ChEBI" id="CHEBI:15378"/>
        <dbReference type="ChEBI" id="CHEBI:15980"/>
        <dbReference type="ChEBI" id="CHEBI:29032"/>
        <dbReference type="ChEBI" id="CHEBI:30616"/>
        <dbReference type="ChEBI" id="CHEBI:33019"/>
        <dbReference type="ChEBI" id="CHEBI:57966"/>
        <dbReference type="ChEBI" id="CHEBI:456215"/>
        <dbReference type="EC" id="6.3.2.1"/>
    </reaction>
</comment>
<comment type="pathway">
    <text evidence="1">Cofactor biosynthesis; (R)-pantothenate biosynthesis; (R)-pantothenate from (R)-pantoate and beta-alanine: step 1/1.</text>
</comment>
<comment type="subunit">
    <text evidence="1">Homodimer.</text>
</comment>
<comment type="subcellular location">
    <subcellularLocation>
        <location evidence="1">Cytoplasm</location>
    </subcellularLocation>
</comment>
<comment type="miscellaneous">
    <text evidence="1">The reaction proceeds by a bi uni uni bi ping pong mechanism.</text>
</comment>
<comment type="similarity">
    <text evidence="1">Belongs to the pantothenate synthetase family.</text>
</comment>
<evidence type="ECO:0000255" key="1">
    <source>
        <dbReference type="HAMAP-Rule" id="MF_00158"/>
    </source>
</evidence>
<sequence>MLIIETLPLLRQQIRRWRQEGKRIALVPTMGNLHEGHMTLVDEAKTRADVVVVTIFVNPLQFERPDDLAHYPRTLQEDCEKLTRHGADLVFAPAAADIYPAGLEKQTYVDVPALSTILEGASRPGHFRGVSTIVSKLFNLIQPDVACFGEKDYQQLALIRKMVADMGYDINIVGVPTVRAKDGLALSSRNGYLTEEERQIAPQLSKIMWALAEKMALGERQIDALLEEAAAQLLRVGFTPDELFIRDAETLQPLTVDSQQAVILMAAWLGKARLIDNQLVDLRH</sequence>
<name>PANC_YERPP</name>
<dbReference type="EC" id="6.3.2.1" evidence="1"/>
<dbReference type="EMBL" id="CP000668">
    <property type="protein sequence ID" value="ABP41316.1"/>
    <property type="molecule type" value="Genomic_DNA"/>
</dbReference>
<dbReference type="RefSeq" id="WP_002209348.1">
    <property type="nucleotide sequence ID" value="NZ_CP009715.1"/>
</dbReference>
<dbReference type="SMR" id="A4TPV4"/>
<dbReference type="GeneID" id="57975307"/>
<dbReference type="KEGG" id="ypp:YPDSF_2954"/>
<dbReference type="PATRIC" id="fig|386656.14.peg.1411"/>
<dbReference type="UniPathway" id="UPA00028">
    <property type="reaction ID" value="UER00005"/>
</dbReference>
<dbReference type="GO" id="GO:0005829">
    <property type="term" value="C:cytosol"/>
    <property type="evidence" value="ECO:0007669"/>
    <property type="project" value="TreeGrafter"/>
</dbReference>
<dbReference type="GO" id="GO:0005524">
    <property type="term" value="F:ATP binding"/>
    <property type="evidence" value="ECO:0007669"/>
    <property type="project" value="UniProtKB-KW"/>
</dbReference>
<dbReference type="GO" id="GO:0004592">
    <property type="term" value="F:pantoate-beta-alanine ligase activity"/>
    <property type="evidence" value="ECO:0007669"/>
    <property type="project" value="UniProtKB-UniRule"/>
</dbReference>
<dbReference type="GO" id="GO:0015940">
    <property type="term" value="P:pantothenate biosynthetic process"/>
    <property type="evidence" value="ECO:0007669"/>
    <property type="project" value="UniProtKB-UniRule"/>
</dbReference>
<dbReference type="CDD" id="cd00560">
    <property type="entry name" value="PanC"/>
    <property type="match status" value="1"/>
</dbReference>
<dbReference type="FunFam" id="3.30.1300.10:FF:000001">
    <property type="entry name" value="Pantothenate synthetase"/>
    <property type="match status" value="1"/>
</dbReference>
<dbReference type="FunFam" id="3.40.50.620:FF:000013">
    <property type="entry name" value="Pantothenate synthetase"/>
    <property type="match status" value="1"/>
</dbReference>
<dbReference type="Gene3D" id="3.40.50.620">
    <property type="entry name" value="HUPs"/>
    <property type="match status" value="1"/>
</dbReference>
<dbReference type="Gene3D" id="3.30.1300.10">
    <property type="entry name" value="Pantoate-beta-alanine ligase, C-terminal domain"/>
    <property type="match status" value="1"/>
</dbReference>
<dbReference type="HAMAP" id="MF_00158">
    <property type="entry name" value="PanC"/>
    <property type="match status" value="1"/>
</dbReference>
<dbReference type="InterPro" id="IPR003721">
    <property type="entry name" value="Pantoate_ligase"/>
</dbReference>
<dbReference type="InterPro" id="IPR042176">
    <property type="entry name" value="Pantoate_ligase_C"/>
</dbReference>
<dbReference type="InterPro" id="IPR014729">
    <property type="entry name" value="Rossmann-like_a/b/a_fold"/>
</dbReference>
<dbReference type="NCBIfam" id="TIGR00018">
    <property type="entry name" value="panC"/>
    <property type="match status" value="1"/>
</dbReference>
<dbReference type="PANTHER" id="PTHR21299">
    <property type="entry name" value="CYTIDYLATE KINASE/PANTOATE-BETA-ALANINE LIGASE"/>
    <property type="match status" value="1"/>
</dbReference>
<dbReference type="PANTHER" id="PTHR21299:SF1">
    <property type="entry name" value="PANTOATE--BETA-ALANINE LIGASE"/>
    <property type="match status" value="1"/>
</dbReference>
<dbReference type="Pfam" id="PF02569">
    <property type="entry name" value="Pantoate_ligase"/>
    <property type="match status" value="1"/>
</dbReference>
<dbReference type="SUPFAM" id="SSF52374">
    <property type="entry name" value="Nucleotidylyl transferase"/>
    <property type="match status" value="1"/>
</dbReference>
<organism>
    <name type="scientific">Yersinia pestis (strain Pestoides F)</name>
    <dbReference type="NCBI Taxonomy" id="386656"/>
    <lineage>
        <taxon>Bacteria</taxon>
        <taxon>Pseudomonadati</taxon>
        <taxon>Pseudomonadota</taxon>
        <taxon>Gammaproteobacteria</taxon>
        <taxon>Enterobacterales</taxon>
        <taxon>Yersiniaceae</taxon>
        <taxon>Yersinia</taxon>
    </lineage>
</organism>
<proteinExistence type="inferred from homology"/>
<reference key="1">
    <citation type="submission" date="2007-02" db="EMBL/GenBank/DDBJ databases">
        <title>Complete sequence of chromosome of Yersinia pestis Pestoides F.</title>
        <authorList>
            <consortium name="US DOE Joint Genome Institute"/>
            <person name="Copeland A."/>
            <person name="Lucas S."/>
            <person name="Lapidus A."/>
            <person name="Barry K."/>
            <person name="Detter J.C."/>
            <person name="Glavina del Rio T."/>
            <person name="Hammon N."/>
            <person name="Israni S."/>
            <person name="Dalin E."/>
            <person name="Tice H."/>
            <person name="Pitluck S."/>
            <person name="Di Bartolo G."/>
            <person name="Chain P."/>
            <person name="Malfatti S."/>
            <person name="Shin M."/>
            <person name="Vergez L."/>
            <person name="Schmutz J."/>
            <person name="Larimer F."/>
            <person name="Land M."/>
            <person name="Hauser L."/>
            <person name="Worsham P."/>
            <person name="Chu M."/>
            <person name="Bearden S."/>
            <person name="Garcia E."/>
            <person name="Richardson P."/>
        </authorList>
    </citation>
    <scope>NUCLEOTIDE SEQUENCE [LARGE SCALE GENOMIC DNA]</scope>
    <source>
        <strain>Pestoides F</strain>
    </source>
</reference>
<protein>
    <recommendedName>
        <fullName evidence="1">Pantothenate synthetase</fullName>
        <shortName evidence="1">PS</shortName>
        <ecNumber evidence="1">6.3.2.1</ecNumber>
    </recommendedName>
    <alternativeName>
        <fullName evidence="1">Pantoate--beta-alanine ligase</fullName>
    </alternativeName>
    <alternativeName>
        <fullName evidence="1">Pantoate-activating enzyme</fullName>
    </alternativeName>
</protein>
<feature type="chain" id="PRO_0000305582" description="Pantothenate synthetase">
    <location>
        <begin position="1"/>
        <end position="284"/>
    </location>
</feature>
<feature type="active site" description="Proton donor" evidence="1">
    <location>
        <position position="37"/>
    </location>
</feature>
<feature type="binding site" evidence="1">
    <location>
        <begin position="30"/>
        <end position="37"/>
    </location>
    <ligand>
        <name>ATP</name>
        <dbReference type="ChEBI" id="CHEBI:30616"/>
    </ligand>
</feature>
<feature type="binding site" evidence="1">
    <location>
        <position position="61"/>
    </location>
    <ligand>
        <name>(R)-pantoate</name>
        <dbReference type="ChEBI" id="CHEBI:15980"/>
    </ligand>
</feature>
<feature type="binding site" evidence="1">
    <location>
        <position position="61"/>
    </location>
    <ligand>
        <name>beta-alanine</name>
        <dbReference type="ChEBI" id="CHEBI:57966"/>
    </ligand>
</feature>
<feature type="binding site" evidence="1">
    <location>
        <begin position="149"/>
        <end position="152"/>
    </location>
    <ligand>
        <name>ATP</name>
        <dbReference type="ChEBI" id="CHEBI:30616"/>
    </ligand>
</feature>
<feature type="binding site" evidence="1">
    <location>
        <position position="155"/>
    </location>
    <ligand>
        <name>(R)-pantoate</name>
        <dbReference type="ChEBI" id="CHEBI:15980"/>
    </ligand>
</feature>
<feature type="binding site" evidence="1">
    <location>
        <position position="178"/>
    </location>
    <ligand>
        <name>ATP</name>
        <dbReference type="ChEBI" id="CHEBI:30616"/>
    </ligand>
</feature>
<feature type="binding site" evidence="1">
    <location>
        <begin position="186"/>
        <end position="189"/>
    </location>
    <ligand>
        <name>ATP</name>
        <dbReference type="ChEBI" id="CHEBI:30616"/>
    </ligand>
</feature>